<comment type="subcellular location">
    <subcellularLocation>
        <location evidence="1">Membrane</location>
        <topology evidence="1">Single-pass type I membrane protein</topology>
    </subcellularLocation>
</comment>
<keyword id="KW-0325">Glycoprotein</keyword>
<keyword id="KW-0472">Membrane</keyword>
<keyword id="KW-1185">Reference proteome</keyword>
<keyword id="KW-0732">Signal</keyword>
<keyword id="KW-0812">Transmembrane</keyword>
<keyword id="KW-1133">Transmembrane helix</keyword>
<proteinExistence type="inferred from homology"/>
<dbReference type="EMBL" id="AC068987">
    <property type="status" value="NOT_ANNOTATED_CDS"/>
    <property type="molecule type" value="Genomic_DNA"/>
</dbReference>
<dbReference type="CCDS" id="CCDS91698.1"/>
<dbReference type="RefSeq" id="NP_001373666.1">
    <property type="nucleotide sequence ID" value="NM_001386737.1"/>
</dbReference>
<dbReference type="STRING" id="9606.ENSP00000493167"/>
<dbReference type="GlyCosmos" id="P0DPE3">
    <property type="glycosylation" value="1 site, No reported glycans"/>
</dbReference>
<dbReference type="GlyGen" id="P0DPE3">
    <property type="glycosylation" value="1 site"/>
</dbReference>
<dbReference type="Ensembl" id="ENST00000642069.2">
    <property type="protein sequence ID" value="ENSP00000493167.1"/>
    <property type="gene ID" value="ENSG00000284730.2"/>
</dbReference>
<dbReference type="GeneID" id="112163659"/>
<dbReference type="MANE-Select" id="ENST00000642069.2">
    <property type="protein sequence ID" value="ENSP00000493167.1"/>
    <property type="RefSeq nucleotide sequence ID" value="NM_001386737.1"/>
    <property type="RefSeq protein sequence ID" value="NP_001373666.1"/>
</dbReference>
<dbReference type="AGR" id="HGNC:53646"/>
<dbReference type="GeneCards" id="TMDD1"/>
<dbReference type="HGNC" id="HGNC:53646">
    <property type="gene designation" value="TMDD1"/>
</dbReference>
<dbReference type="HPA" id="ENSG00000284730">
    <property type="expression patterns" value="Not detected"/>
</dbReference>
<dbReference type="neXtProt" id="NX_P0DPE3"/>
<dbReference type="VEuPathDB" id="HostDB:ENSG00000284730"/>
<dbReference type="GeneTree" id="ENSGT00390000003023"/>
<dbReference type="InParanoid" id="P0DPE3"/>
<dbReference type="OMA" id="EECGHFR"/>
<dbReference type="OrthoDB" id="9049812at2759"/>
<dbReference type="PAN-GO" id="P0DPE3">
    <property type="GO annotations" value="0 GO annotations based on evolutionary models"/>
</dbReference>
<dbReference type="Pharos" id="P0DPE3">
    <property type="development level" value="Tdark"/>
</dbReference>
<dbReference type="PRO" id="PR:P0DPE3"/>
<dbReference type="Proteomes" id="UP000005640">
    <property type="component" value="Chromosome 12"/>
</dbReference>
<dbReference type="Bgee" id="ENSG00000284730">
    <property type="expression patterns" value="Expressed in right lobe of liver and 71 other cell types or tissues"/>
</dbReference>
<dbReference type="GO" id="GO:0016020">
    <property type="term" value="C:membrane"/>
    <property type="evidence" value="ECO:0007669"/>
    <property type="project" value="UniProtKB-SubCell"/>
</dbReference>
<dbReference type="GO" id="GO:0007165">
    <property type="term" value="P:signal transduction"/>
    <property type="evidence" value="ECO:0007669"/>
    <property type="project" value="InterPro"/>
</dbReference>
<dbReference type="InterPro" id="IPR000488">
    <property type="entry name" value="Death_dom"/>
</dbReference>
<dbReference type="PROSITE" id="PS50017">
    <property type="entry name" value="DEATH_DOMAIN"/>
    <property type="match status" value="1"/>
</dbReference>
<feature type="signal peptide" evidence="1">
    <location>
        <begin position="1"/>
        <end position="27"/>
    </location>
</feature>
<feature type="chain" id="PRO_0000443078" description="Transmembrane and death domain protein 1" evidence="1">
    <location>
        <begin position="28"/>
        <end position="317"/>
    </location>
</feature>
<feature type="topological domain" description="Extracellular" evidence="4">
    <location>
        <begin position="28"/>
        <end position="218"/>
    </location>
</feature>
<feature type="transmembrane region" description="Helical" evidence="1">
    <location>
        <begin position="219"/>
        <end position="239"/>
    </location>
</feature>
<feature type="topological domain" description="Cytoplasmic" evidence="4">
    <location>
        <begin position="240"/>
        <end position="317"/>
    </location>
</feature>
<feature type="domain" description="Death" evidence="2">
    <location>
        <begin position="66"/>
        <end position="150"/>
    </location>
</feature>
<feature type="region of interest" description="Disordered" evidence="3">
    <location>
        <begin position="62"/>
        <end position="106"/>
    </location>
</feature>
<feature type="compositionally biased region" description="Basic and acidic residues" evidence="3">
    <location>
        <begin position="62"/>
        <end position="73"/>
    </location>
</feature>
<feature type="glycosylation site" description="N-linked (GlcNAc...) asparagine" evidence="1">
    <location>
        <position position="78"/>
    </location>
</feature>
<sequence length="317" mass="33577">MAARTLASALVLTLWVWALAPAGAVDAMGPHAAVRLAELLTPEECGHFRSLLEAPEPDVEAELSRLSEDRLARPEPLNTTSGSPSRRRRREAAEDPAGRVAGPGEVSDGCREALAAWLAPQAASLSWDRLARALRRSGRPDVARELGKNLHQQATLQLRKFGQRFLPRPGAAARVPFAPAPRPRRAAVPAPDWDALQLIVERLPQPLYERSPMGWAGPLALGLLTGFVGALGTGALVVLLTLWITGGDGDRASPGSPGPLATVQGWWETKLLLPKERRAPPGAWAADGPDSPSPHSALALSCKMGAQSWGSGALDGL</sequence>
<reference key="1">
    <citation type="journal article" date="2006" name="Nature">
        <title>The finished DNA sequence of human chromosome 12.</title>
        <authorList>
            <person name="Scherer S.E."/>
            <person name="Muzny D.M."/>
            <person name="Buhay C.J."/>
            <person name="Chen R."/>
            <person name="Cree A."/>
            <person name="Ding Y."/>
            <person name="Dugan-Rocha S."/>
            <person name="Gill R."/>
            <person name="Gunaratne P."/>
            <person name="Harris R.A."/>
            <person name="Hawes A.C."/>
            <person name="Hernandez J."/>
            <person name="Hodgson A.V."/>
            <person name="Hume J."/>
            <person name="Jackson A."/>
            <person name="Khan Z.M."/>
            <person name="Kovar-Smith C."/>
            <person name="Lewis L.R."/>
            <person name="Lozado R.J."/>
            <person name="Metzker M.L."/>
            <person name="Milosavljevic A."/>
            <person name="Miner G.R."/>
            <person name="Montgomery K.T."/>
            <person name="Morgan M.B."/>
            <person name="Nazareth L.V."/>
            <person name="Scott G."/>
            <person name="Sodergren E."/>
            <person name="Song X.-Z."/>
            <person name="Steffen D."/>
            <person name="Lovering R.C."/>
            <person name="Wheeler D.A."/>
            <person name="Worley K.C."/>
            <person name="Yuan Y."/>
            <person name="Zhang Z."/>
            <person name="Adams C.Q."/>
            <person name="Ansari-Lari M.A."/>
            <person name="Ayele M."/>
            <person name="Brown M.J."/>
            <person name="Chen G."/>
            <person name="Chen Z."/>
            <person name="Clerc-Blankenburg K.P."/>
            <person name="Davis C."/>
            <person name="Delgado O."/>
            <person name="Dinh H.H."/>
            <person name="Draper H."/>
            <person name="Gonzalez-Garay M.L."/>
            <person name="Havlak P."/>
            <person name="Jackson L.R."/>
            <person name="Jacob L.S."/>
            <person name="Kelly S.H."/>
            <person name="Li L."/>
            <person name="Li Z."/>
            <person name="Liu J."/>
            <person name="Liu W."/>
            <person name="Lu J."/>
            <person name="Maheshwari M."/>
            <person name="Nguyen B.-V."/>
            <person name="Okwuonu G.O."/>
            <person name="Pasternak S."/>
            <person name="Perez L.M."/>
            <person name="Plopper F.J.H."/>
            <person name="Santibanez J."/>
            <person name="Shen H."/>
            <person name="Tabor P.E."/>
            <person name="Verduzco D."/>
            <person name="Waldron L."/>
            <person name="Wang Q."/>
            <person name="Williams G.A."/>
            <person name="Zhang J."/>
            <person name="Zhou J."/>
            <person name="Allen C.C."/>
            <person name="Amin A.G."/>
            <person name="Anyalebechi V."/>
            <person name="Bailey M."/>
            <person name="Barbaria J.A."/>
            <person name="Bimage K.E."/>
            <person name="Bryant N.P."/>
            <person name="Burch P.E."/>
            <person name="Burkett C.E."/>
            <person name="Burrell K.L."/>
            <person name="Calderon E."/>
            <person name="Cardenas V."/>
            <person name="Carter K."/>
            <person name="Casias K."/>
            <person name="Cavazos I."/>
            <person name="Cavazos S.R."/>
            <person name="Ceasar H."/>
            <person name="Chacko J."/>
            <person name="Chan S.N."/>
            <person name="Chavez D."/>
            <person name="Christopoulos C."/>
            <person name="Chu J."/>
            <person name="Cockrell R."/>
            <person name="Cox C.D."/>
            <person name="Dang M."/>
            <person name="Dathorne S.R."/>
            <person name="David R."/>
            <person name="Davis C.M."/>
            <person name="Davy-Carroll L."/>
            <person name="Deshazo D.R."/>
            <person name="Donlin J.E."/>
            <person name="D'Souza L."/>
            <person name="Eaves K.A."/>
            <person name="Egan A."/>
            <person name="Emery-Cohen A.J."/>
            <person name="Escotto M."/>
            <person name="Flagg N."/>
            <person name="Forbes L.D."/>
            <person name="Gabisi A.M."/>
            <person name="Garza M."/>
            <person name="Hamilton C."/>
            <person name="Henderson N."/>
            <person name="Hernandez O."/>
            <person name="Hines S."/>
            <person name="Hogues M.E."/>
            <person name="Huang M."/>
            <person name="Idlebird D.G."/>
            <person name="Johnson R."/>
            <person name="Jolivet A."/>
            <person name="Jones S."/>
            <person name="Kagan R."/>
            <person name="King L.M."/>
            <person name="Leal B."/>
            <person name="Lebow H."/>
            <person name="Lee S."/>
            <person name="LeVan J.M."/>
            <person name="Lewis L.C."/>
            <person name="London P."/>
            <person name="Lorensuhewa L.M."/>
            <person name="Loulseged H."/>
            <person name="Lovett D.A."/>
            <person name="Lucier A."/>
            <person name="Lucier R.L."/>
            <person name="Ma J."/>
            <person name="Madu R.C."/>
            <person name="Mapua P."/>
            <person name="Martindale A.D."/>
            <person name="Martinez E."/>
            <person name="Massey E."/>
            <person name="Mawhiney S."/>
            <person name="Meador M.G."/>
            <person name="Mendez S."/>
            <person name="Mercado C."/>
            <person name="Mercado I.C."/>
            <person name="Merritt C.E."/>
            <person name="Miner Z.L."/>
            <person name="Minja E."/>
            <person name="Mitchell T."/>
            <person name="Mohabbat F."/>
            <person name="Mohabbat K."/>
            <person name="Montgomery B."/>
            <person name="Moore N."/>
            <person name="Morris S."/>
            <person name="Munidasa M."/>
            <person name="Ngo R.N."/>
            <person name="Nguyen N.B."/>
            <person name="Nickerson E."/>
            <person name="Nwaokelemeh O.O."/>
            <person name="Nwokenkwo S."/>
            <person name="Obregon M."/>
            <person name="Oguh M."/>
            <person name="Oragunye N."/>
            <person name="Oviedo R.J."/>
            <person name="Parish B.J."/>
            <person name="Parker D.N."/>
            <person name="Parrish J."/>
            <person name="Parks K.L."/>
            <person name="Paul H.A."/>
            <person name="Payton B.A."/>
            <person name="Perez A."/>
            <person name="Perrin W."/>
            <person name="Pickens A."/>
            <person name="Primus E.L."/>
            <person name="Pu L.-L."/>
            <person name="Puazo M."/>
            <person name="Quiles M.M."/>
            <person name="Quiroz J.B."/>
            <person name="Rabata D."/>
            <person name="Reeves K."/>
            <person name="Ruiz S.J."/>
            <person name="Shao H."/>
            <person name="Sisson I."/>
            <person name="Sonaike T."/>
            <person name="Sorelle R.P."/>
            <person name="Sutton A.E."/>
            <person name="Svatek A.F."/>
            <person name="Svetz L.A."/>
            <person name="Tamerisa K.S."/>
            <person name="Taylor T.R."/>
            <person name="Teague B."/>
            <person name="Thomas N."/>
            <person name="Thorn R.D."/>
            <person name="Trejos Z.Y."/>
            <person name="Trevino B.K."/>
            <person name="Ukegbu O.N."/>
            <person name="Urban J.B."/>
            <person name="Vasquez L.I."/>
            <person name="Vera V.A."/>
            <person name="Villasana D.M."/>
            <person name="Wang L."/>
            <person name="Ward-Moore S."/>
            <person name="Warren J.T."/>
            <person name="Wei X."/>
            <person name="White F."/>
            <person name="Williamson A.L."/>
            <person name="Wleczyk R."/>
            <person name="Wooden H.S."/>
            <person name="Wooden S.H."/>
            <person name="Yen J."/>
            <person name="Yoon L."/>
            <person name="Yoon V."/>
            <person name="Zorrilla S.E."/>
            <person name="Nelson D."/>
            <person name="Kucherlapati R."/>
            <person name="Weinstock G."/>
            <person name="Gibbs R.A."/>
        </authorList>
    </citation>
    <scope>NUCLEOTIDE SEQUENCE [LARGE SCALE GENOMIC DNA]</scope>
</reference>
<organism>
    <name type="scientific">Homo sapiens</name>
    <name type="common">Human</name>
    <dbReference type="NCBI Taxonomy" id="9606"/>
    <lineage>
        <taxon>Eukaryota</taxon>
        <taxon>Metazoa</taxon>
        <taxon>Chordata</taxon>
        <taxon>Craniata</taxon>
        <taxon>Vertebrata</taxon>
        <taxon>Euteleostomi</taxon>
        <taxon>Mammalia</taxon>
        <taxon>Eutheria</taxon>
        <taxon>Euarchontoglires</taxon>
        <taxon>Primates</taxon>
        <taxon>Haplorrhini</taxon>
        <taxon>Catarrhini</taxon>
        <taxon>Hominidae</taxon>
        <taxon>Homo</taxon>
    </lineage>
</organism>
<accession>P0DPE3</accession>
<name>TMDD1_HUMAN</name>
<evidence type="ECO:0000255" key="1"/>
<evidence type="ECO:0000255" key="2">
    <source>
        <dbReference type="PROSITE-ProRule" id="PRU00064"/>
    </source>
</evidence>
<evidence type="ECO:0000256" key="3">
    <source>
        <dbReference type="SAM" id="MobiDB-lite"/>
    </source>
</evidence>
<evidence type="ECO:0000305" key="4"/>
<evidence type="ECO:0000312" key="5">
    <source>
        <dbReference type="HGNC" id="HGNC:53646"/>
    </source>
</evidence>
<protein>
    <recommendedName>
        <fullName evidence="4">Transmembrane and death domain protein 1</fullName>
    </recommendedName>
</protein>
<gene>
    <name evidence="5" type="primary">TMDD1</name>
    <name type="synonym">C12orf81</name>
</gene>